<reference key="1">
    <citation type="journal article" date="2009" name="Environ. Microbiol.">
        <title>Contribution of mobile genetic elements to Desulfovibrio vulgaris genome plasticity.</title>
        <authorList>
            <person name="Walker C.B."/>
            <person name="Stolyar S."/>
            <person name="Chivian D."/>
            <person name="Pinel N."/>
            <person name="Gabster J.A."/>
            <person name="Dehal P.S."/>
            <person name="He Z."/>
            <person name="Yang Z.K."/>
            <person name="Yen H.C."/>
            <person name="Zhou J."/>
            <person name="Wall J.D."/>
            <person name="Hazen T.C."/>
            <person name="Arkin A.P."/>
            <person name="Stahl D.A."/>
        </authorList>
    </citation>
    <scope>NUCLEOTIDE SEQUENCE [LARGE SCALE GENOMIC DNA]</scope>
    <source>
        <strain>DP4</strain>
    </source>
</reference>
<dbReference type="EC" id="2.1.1.77" evidence="1"/>
<dbReference type="EMBL" id="CP000527">
    <property type="protein sequence ID" value="ABM28331.1"/>
    <property type="status" value="ALT_INIT"/>
    <property type="molecule type" value="Genomic_DNA"/>
</dbReference>
<dbReference type="SMR" id="A1VD15"/>
<dbReference type="KEGG" id="dvl:Dvul_1313"/>
<dbReference type="HOGENOM" id="CLU_055432_2_0_7"/>
<dbReference type="Proteomes" id="UP000009173">
    <property type="component" value="Chromosome"/>
</dbReference>
<dbReference type="GO" id="GO:0005737">
    <property type="term" value="C:cytoplasm"/>
    <property type="evidence" value="ECO:0007669"/>
    <property type="project" value="UniProtKB-SubCell"/>
</dbReference>
<dbReference type="GO" id="GO:0004719">
    <property type="term" value="F:protein-L-isoaspartate (D-aspartate) O-methyltransferase activity"/>
    <property type="evidence" value="ECO:0007669"/>
    <property type="project" value="UniProtKB-UniRule"/>
</dbReference>
<dbReference type="GO" id="GO:0032259">
    <property type="term" value="P:methylation"/>
    <property type="evidence" value="ECO:0007669"/>
    <property type="project" value="UniProtKB-KW"/>
</dbReference>
<dbReference type="GO" id="GO:0036211">
    <property type="term" value="P:protein modification process"/>
    <property type="evidence" value="ECO:0007669"/>
    <property type="project" value="UniProtKB-UniRule"/>
</dbReference>
<dbReference type="GO" id="GO:0030091">
    <property type="term" value="P:protein repair"/>
    <property type="evidence" value="ECO:0007669"/>
    <property type="project" value="UniProtKB-UniRule"/>
</dbReference>
<dbReference type="CDD" id="cd02440">
    <property type="entry name" value="AdoMet_MTases"/>
    <property type="match status" value="1"/>
</dbReference>
<dbReference type="FunFam" id="3.40.50.150:FF:000010">
    <property type="entry name" value="Protein-L-isoaspartate O-methyltransferase"/>
    <property type="match status" value="1"/>
</dbReference>
<dbReference type="Gene3D" id="3.40.50.150">
    <property type="entry name" value="Vaccinia Virus protein VP39"/>
    <property type="match status" value="1"/>
</dbReference>
<dbReference type="HAMAP" id="MF_00090">
    <property type="entry name" value="PIMT"/>
    <property type="match status" value="1"/>
</dbReference>
<dbReference type="InterPro" id="IPR000682">
    <property type="entry name" value="PCMT"/>
</dbReference>
<dbReference type="InterPro" id="IPR029063">
    <property type="entry name" value="SAM-dependent_MTases_sf"/>
</dbReference>
<dbReference type="NCBIfam" id="TIGR00080">
    <property type="entry name" value="pimt"/>
    <property type="match status" value="1"/>
</dbReference>
<dbReference type="NCBIfam" id="NF001453">
    <property type="entry name" value="PRK00312.1"/>
    <property type="match status" value="1"/>
</dbReference>
<dbReference type="PANTHER" id="PTHR11579">
    <property type="entry name" value="PROTEIN-L-ISOASPARTATE O-METHYLTRANSFERASE"/>
    <property type="match status" value="1"/>
</dbReference>
<dbReference type="PANTHER" id="PTHR11579:SF0">
    <property type="entry name" value="PROTEIN-L-ISOASPARTATE(D-ASPARTATE) O-METHYLTRANSFERASE"/>
    <property type="match status" value="1"/>
</dbReference>
<dbReference type="Pfam" id="PF01135">
    <property type="entry name" value="PCMT"/>
    <property type="match status" value="1"/>
</dbReference>
<dbReference type="SUPFAM" id="SSF53335">
    <property type="entry name" value="S-adenosyl-L-methionine-dependent methyltransferases"/>
    <property type="match status" value="1"/>
</dbReference>
<dbReference type="PROSITE" id="PS01279">
    <property type="entry name" value="PCMT"/>
    <property type="match status" value="1"/>
</dbReference>
<evidence type="ECO:0000255" key="1">
    <source>
        <dbReference type="HAMAP-Rule" id="MF_00090"/>
    </source>
</evidence>
<evidence type="ECO:0000305" key="2"/>
<gene>
    <name evidence="1" type="primary">pcm</name>
    <name type="ordered locus">Dvul_1313</name>
</gene>
<protein>
    <recommendedName>
        <fullName evidence="1">Protein-L-isoaspartate O-methyltransferase</fullName>
        <ecNumber evidence="1">2.1.1.77</ecNumber>
    </recommendedName>
    <alternativeName>
        <fullName evidence="1">L-isoaspartyl protein carboxyl methyltransferase</fullName>
    </alternativeName>
    <alternativeName>
        <fullName evidence="1">Protein L-isoaspartyl methyltransferase</fullName>
    </alternativeName>
    <alternativeName>
        <fullName evidence="1">Protein-beta-aspartate methyltransferase</fullName>
        <shortName evidence="1">PIMT</shortName>
    </alternativeName>
</protein>
<sequence length="210" mass="23438">MRRNRERMVRQQLMPRGISDEAVLAAMGCVPRHLFVQEALRAQAYEDHPLPIGNGQTISQPFIVAFMSQLLEAKPGMRVLEIGTGSGYQAAVLAEMGLDVYTVERIREIYQTTRDLLRALRYTRIRCRLDDGTLGWPESAPFDRIIVTAGGPEIPVPLVEQLADPGVMVLPVGVSRRSQELVVVRKRDGKLFRSNRGGVSFVDLVGCHGW</sequence>
<proteinExistence type="inferred from homology"/>
<name>PIMT_NITV4</name>
<keyword id="KW-0963">Cytoplasm</keyword>
<keyword id="KW-0489">Methyltransferase</keyword>
<keyword id="KW-0949">S-adenosyl-L-methionine</keyword>
<keyword id="KW-0808">Transferase</keyword>
<feature type="chain" id="PRO_0000351854" description="Protein-L-isoaspartate O-methyltransferase">
    <location>
        <begin position="1"/>
        <end position="210"/>
    </location>
</feature>
<feature type="active site" evidence="1">
    <location>
        <position position="59"/>
    </location>
</feature>
<comment type="function">
    <text evidence="1">Catalyzes the methyl esterification of L-isoaspartyl residues in peptides and proteins that result from spontaneous decomposition of normal L-aspartyl and L-asparaginyl residues. It plays a role in the repair and/or degradation of damaged proteins.</text>
</comment>
<comment type="catalytic activity">
    <reaction evidence="1">
        <text>[protein]-L-isoaspartate + S-adenosyl-L-methionine = [protein]-L-isoaspartate alpha-methyl ester + S-adenosyl-L-homocysteine</text>
        <dbReference type="Rhea" id="RHEA:12705"/>
        <dbReference type="Rhea" id="RHEA-COMP:12143"/>
        <dbReference type="Rhea" id="RHEA-COMP:12144"/>
        <dbReference type="ChEBI" id="CHEBI:57856"/>
        <dbReference type="ChEBI" id="CHEBI:59789"/>
        <dbReference type="ChEBI" id="CHEBI:90596"/>
        <dbReference type="ChEBI" id="CHEBI:90598"/>
        <dbReference type="EC" id="2.1.1.77"/>
    </reaction>
</comment>
<comment type="subcellular location">
    <subcellularLocation>
        <location evidence="1">Cytoplasm</location>
    </subcellularLocation>
</comment>
<comment type="similarity">
    <text evidence="1">Belongs to the methyltransferase superfamily. L-isoaspartyl/D-aspartyl protein methyltransferase family.</text>
</comment>
<comment type="sequence caution" evidence="2">
    <conflict type="erroneous initiation">
        <sequence resource="EMBL-CDS" id="ABM28331"/>
    </conflict>
</comment>
<organism>
    <name type="scientific">Nitratidesulfovibrio vulgaris (strain DP4)</name>
    <name type="common">Desulfovibrio vulgaris</name>
    <dbReference type="NCBI Taxonomy" id="391774"/>
    <lineage>
        <taxon>Bacteria</taxon>
        <taxon>Pseudomonadati</taxon>
        <taxon>Thermodesulfobacteriota</taxon>
        <taxon>Desulfovibrionia</taxon>
        <taxon>Desulfovibrionales</taxon>
        <taxon>Desulfovibrionaceae</taxon>
        <taxon>Nitratidesulfovibrio</taxon>
    </lineage>
</organism>
<accession>A1VD15</accession>